<protein>
    <recommendedName>
        <fullName evidence="1">Translation initiation factor IF-1</fullName>
    </recommendedName>
</protein>
<gene>
    <name evidence="1" type="primary">infA</name>
    <name type="ordered locus">FTA_1308</name>
</gene>
<comment type="function">
    <text evidence="1">One of the essential components for the initiation of protein synthesis. Stabilizes the binding of IF-2 and IF-3 on the 30S subunit to which N-formylmethionyl-tRNA(fMet) subsequently binds. Helps modulate mRNA selection, yielding the 30S pre-initiation complex (PIC). Upon addition of the 50S ribosomal subunit IF-1, IF-2 and IF-3 are released leaving the mature 70S translation initiation complex.</text>
</comment>
<comment type="subunit">
    <text evidence="1">Component of the 30S ribosomal translation pre-initiation complex which assembles on the 30S ribosome in the order IF-2 and IF-3, IF-1 and N-formylmethionyl-tRNA(fMet); mRNA recruitment can occur at any time during PIC assembly.</text>
</comment>
<comment type="subcellular location">
    <subcellularLocation>
        <location evidence="1">Cytoplasm</location>
    </subcellularLocation>
</comment>
<comment type="similarity">
    <text evidence="1">Belongs to the IF-1 family.</text>
</comment>
<reference key="1">
    <citation type="journal article" date="2009" name="PLoS ONE">
        <title>Complete genome sequence of Francisella tularensis subspecies holarctica FTNF002-00.</title>
        <authorList>
            <person name="Barabote R.D."/>
            <person name="Xie G."/>
            <person name="Brettin T.S."/>
            <person name="Hinrichs S.H."/>
            <person name="Fey P.D."/>
            <person name="Jay J.J."/>
            <person name="Engle J.L."/>
            <person name="Godbole S.D."/>
            <person name="Noronha J.M."/>
            <person name="Scheuermann R.H."/>
            <person name="Zhou L.W."/>
            <person name="Lion C."/>
            <person name="Dempsey M.P."/>
        </authorList>
    </citation>
    <scope>NUCLEOTIDE SEQUENCE [LARGE SCALE GENOMIC DNA]</scope>
    <source>
        <strain>FTNF002-00 / FTA</strain>
    </source>
</reference>
<evidence type="ECO:0000255" key="1">
    <source>
        <dbReference type="HAMAP-Rule" id="MF_00075"/>
    </source>
</evidence>
<dbReference type="EMBL" id="CP000803">
    <property type="protein sequence ID" value="ABU61783.2"/>
    <property type="molecule type" value="Genomic_DNA"/>
</dbReference>
<dbReference type="RefSeq" id="WP_003016350.1">
    <property type="nucleotide sequence ID" value="NC_009749.1"/>
</dbReference>
<dbReference type="SMR" id="A7NCT0"/>
<dbReference type="KEGG" id="fta:FTA_1308"/>
<dbReference type="HOGENOM" id="CLU_151267_1_0_6"/>
<dbReference type="GO" id="GO:0005829">
    <property type="term" value="C:cytosol"/>
    <property type="evidence" value="ECO:0007669"/>
    <property type="project" value="TreeGrafter"/>
</dbReference>
<dbReference type="GO" id="GO:0043022">
    <property type="term" value="F:ribosome binding"/>
    <property type="evidence" value="ECO:0007669"/>
    <property type="project" value="UniProtKB-UniRule"/>
</dbReference>
<dbReference type="GO" id="GO:0019843">
    <property type="term" value="F:rRNA binding"/>
    <property type="evidence" value="ECO:0007669"/>
    <property type="project" value="UniProtKB-UniRule"/>
</dbReference>
<dbReference type="GO" id="GO:0003743">
    <property type="term" value="F:translation initiation factor activity"/>
    <property type="evidence" value="ECO:0007669"/>
    <property type="project" value="UniProtKB-UniRule"/>
</dbReference>
<dbReference type="CDD" id="cd04451">
    <property type="entry name" value="S1_IF1"/>
    <property type="match status" value="1"/>
</dbReference>
<dbReference type="FunFam" id="2.40.50.140:FF:000002">
    <property type="entry name" value="Translation initiation factor IF-1"/>
    <property type="match status" value="1"/>
</dbReference>
<dbReference type="Gene3D" id="2.40.50.140">
    <property type="entry name" value="Nucleic acid-binding proteins"/>
    <property type="match status" value="1"/>
</dbReference>
<dbReference type="HAMAP" id="MF_00075">
    <property type="entry name" value="IF_1"/>
    <property type="match status" value="1"/>
</dbReference>
<dbReference type="InterPro" id="IPR012340">
    <property type="entry name" value="NA-bd_OB-fold"/>
</dbReference>
<dbReference type="InterPro" id="IPR006196">
    <property type="entry name" value="RNA-binding_domain_S1_IF1"/>
</dbReference>
<dbReference type="InterPro" id="IPR003029">
    <property type="entry name" value="S1_domain"/>
</dbReference>
<dbReference type="InterPro" id="IPR004368">
    <property type="entry name" value="TIF_IF1"/>
</dbReference>
<dbReference type="NCBIfam" id="TIGR00008">
    <property type="entry name" value="infA"/>
    <property type="match status" value="1"/>
</dbReference>
<dbReference type="PANTHER" id="PTHR33370">
    <property type="entry name" value="TRANSLATION INITIATION FACTOR IF-1, CHLOROPLASTIC"/>
    <property type="match status" value="1"/>
</dbReference>
<dbReference type="PANTHER" id="PTHR33370:SF1">
    <property type="entry name" value="TRANSLATION INITIATION FACTOR IF-1, CHLOROPLASTIC"/>
    <property type="match status" value="1"/>
</dbReference>
<dbReference type="Pfam" id="PF01176">
    <property type="entry name" value="eIF-1a"/>
    <property type="match status" value="1"/>
</dbReference>
<dbReference type="SMART" id="SM00316">
    <property type="entry name" value="S1"/>
    <property type="match status" value="1"/>
</dbReference>
<dbReference type="SUPFAM" id="SSF50249">
    <property type="entry name" value="Nucleic acid-binding proteins"/>
    <property type="match status" value="1"/>
</dbReference>
<dbReference type="PROSITE" id="PS50832">
    <property type="entry name" value="S1_IF1_TYPE"/>
    <property type="match status" value="1"/>
</dbReference>
<accession>A7NCT0</accession>
<name>IF1_FRATF</name>
<sequence>MAKEDCIEMEGVVLEALPNTMFRVELENGRIVTAHISGKMRKNYIRILTGDKVVVEITPYDLTKGRIKFRSK</sequence>
<organism>
    <name type="scientific">Francisella tularensis subsp. holarctica (strain FTNF002-00 / FTA)</name>
    <dbReference type="NCBI Taxonomy" id="458234"/>
    <lineage>
        <taxon>Bacteria</taxon>
        <taxon>Pseudomonadati</taxon>
        <taxon>Pseudomonadota</taxon>
        <taxon>Gammaproteobacteria</taxon>
        <taxon>Thiotrichales</taxon>
        <taxon>Francisellaceae</taxon>
        <taxon>Francisella</taxon>
    </lineage>
</organism>
<feature type="chain" id="PRO_0000338827" description="Translation initiation factor IF-1">
    <location>
        <begin position="1"/>
        <end position="72"/>
    </location>
</feature>
<feature type="domain" description="S1-like" evidence="1">
    <location>
        <begin position="1"/>
        <end position="72"/>
    </location>
</feature>
<keyword id="KW-0963">Cytoplasm</keyword>
<keyword id="KW-0396">Initiation factor</keyword>
<keyword id="KW-0648">Protein biosynthesis</keyword>
<keyword id="KW-0694">RNA-binding</keyword>
<keyword id="KW-0699">rRNA-binding</keyword>
<proteinExistence type="inferred from homology"/>